<feature type="chain" id="PRO_0000373559" description="Uncharacterized protein B175L">
    <location>
        <begin position="1"/>
        <end position="175"/>
    </location>
</feature>
<dbReference type="EMBL" id="AY261360">
    <property type="status" value="NOT_ANNOTATED_CDS"/>
    <property type="molecule type" value="Genomic_DNA"/>
</dbReference>
<dbReference type="Proteomes" id="UP000000861">
    <property type="component" value="Segment"/>
</dbReference>
<dbReference type="GO" id="GO:0008270">
    <property type="term" value="F:zinc ion binding"/>
    <property type="evidence" value="ECO:0007669"/>
    <property type="project" value="InterPro"/>
</dbReference>
<dbReference type="InterPro" id="IPR010507">
    <property type="entry name" value="Znf_MYM"/>
</dbReference>
<dbReference type="Pfam" id="PF06467">
    <property type="entry name" value="zf-FCS"/>
    <property type="match status" value="1"/>
</dbReference>
<protein>
    <recommendedName>
        <fullName>Uncharacterized protein B175L</fullName>
        <shortName>pB175L</shortName>
    </recommendedName>
</protein>
<gene>
    <name type="ordered locus">Ken-097</name>
</gene>
<organismHost>
    <name type="scientific">Ornithodoros</name>
    <name type="common">relapsing fever ticks</name>
    <dbReference type="NCBI Taxonomy" id="6937"/>
</organismHost>
<organismHost>
    <name type="scientific">Phacochoerus aethiopicus</name>
    <name type="common">Warthog</name>
    <dbReference type="NCBI Taxonomy" id="85517"/>
</organismHost>
<organismHost>
    <name type="scientific">Phacochoerus africanus</name>
    <name type="common">Warthog</name>
    <dbReference type="NCBI Taxonomy" id="41426"/>
</organismHost>
<organismHost>
    <name type="scientific">Potamochoerus larvatus</name>
    <name type="common">Bushpig</name>
    <dbReference type="NCBI Taxonomy" id="273792"/>
</organismHost>
<organismHost>
    <name type="scientific">Sus scrofa</name>
    <name type="common">Pig</name>
    <dbReference type="NCBI Taxonomy" id="9823"/>
</organismHost>
<name>VF175_ASFK5</name>
<comment type="induction">
    <text evidence="1">Expressed in the late phase of the viral replicative cycle.</text>
</comment>
<comment type="similarity">
    <text evidence="1">Belongs to the asfivirus B175L family.</text>
</comment>
<sequence>METNCPNILYLSGITIEECLQSKKTSTDALNTNGDEAEVEKKLPSVFTSVSKWVTYSSFKCWTCHLYFKTVPKFVPTYMRENERGEIEMGVLGNFCSFSCAASYIDLHYTEPKRWEARELLNMLYRFFTSQWISYIRPALSYTMRKEYGGKLSEEAFISELHTLEESISSKDIFI</sequence>
<proteinExistence type="inferred from homology"/>
<keyword id="KW-0426">Late protein</keyword>
<organism>
    <name type="scientific">African swine fever virus (isolate Pig/Kenya/KEN-50/1950)</name>
    <name type="common">ASFV</name>
    <dbReference type="NCBI Taxonomy" id="561445"/>
    <lineage>
        <taxon>Viruses</taxon>
        <taxon>Varidnaviria</taxon>
        <taxon>Bamfordvirae</taxon>
        <taxon>Nucleocytoviricota</taxon>
        <taxon>Pokkesviricetes</taxon>
        <taxon>Asfuvirales</taxon>
        <taxon>Asfarviridae</taxon>
        <taxon>Asfivirus</taxon>
        <taxon>African swine fever virus</taxon>
    </lineage>
</organism>
<reference key="1">
    <citation type="submission" date="2003-03" db="EMBL/GenBank/DDBJ databases">
        <title>African swine fever virus genomes.</title>
        <authorList>
            <person name="Kutish G.F."/>
            <person name="Rock D.L."/>
        </authorList>
    </citation>
    <scope>NUCLEOTIDE SEQUENCE [LARGE SCALE GENOMIC DNA]</scope>
</reference>
<evidence type="ECO:0000305" key="1"/>
<accession>P0CA76</accession>